<dbReference type="EC" id="3.4.23.49"/>
<dbReference type="EMBL" id="AE005174">
    <property type="protein sequence ID" value="AAG56020.1"/>
    <property type="molecule type" value="Genomic_DNA"/>
</dbReference>
<dbReference type="EMBL" id="BA000007">
    <property type="protein sequence ID" value="BAB35086.1"/>
    <property type="molecule type" value="Genomic_DNA"/>
</dbReference>
<dbReference type="PIR" id="G90836">
    <property type="entry name" value="G90836"/>
</dbReference>
<dbReference type="PIR" id="H85694">
    <property type="entry name" value="H85694"/>
</dbReference>
<dbReference type="RefSeq" id="NP_309690.1">
    <property type="nucleotide sequence ID" value="NC_002695.1"/>
</dbReference>
<dbReference type="RefSeq" id="WP_001201843.1">
    <property type="nucleotide sequence ID" value="NZ_VOAI01000074.1"/>
</dbReference>
<dbReference type="SMR" id="P58603"/>
<dbReference type="STRING" id="155864.Z1931"/>
<dbReference type="MEROPS" id="A26.001"/>
<dbReference type="GeneID" id="913212"/>
<dbReference type="KEGG" id="ece:Z1931"/>
<dbReference type="KEGG" id="ecs:ECs_1663"/>
<dbReference type="PATRIC" id="fig|386585.9.peg.1760"/>
<dbReference type="eggNOG" id="COG4571">
    <property type="taxonomic scope" value="Bacteria"/>
</dbReference>
<dbReference type="HOGENOM" id="CLU_063041_1_0_6"/>
<dbReference type="OMA" id="HENFEFG"/>
<dbReference type="BRENDA" id="3.4.23.49">
    <property type="organism ID" value="2026"/>
</dbReference>
<dbReference type="Proteomes" id="UP000000558">
    <property type="component" value="Chromosome"/>
</dbReference>
<dbReference type="Proteomes" id="UP000002519">
    <property type="component" value="Chromosome"/>
</dbReference>
<dbReference type="GO" id="GO:0009279">
    <property type="term" value="C:cell outer membrane"/>
    <property type="evidence" value="ECO:0007669"/>
    <property type="project" value="UniProtKB-SubCell"/>
</dbReference>
<dbReference type="GO" id="GO:0004190">
    <property type="term" value="F:aspartic-type endopeptidase activity"/>
    <property type="evidence" value="ECO:0007669"/>
    <property type="project" value="UniProtKB-KW"/>
</dbReference>
<dbReference type="GO" id="GO:0006508">
    <property type="term" value="P:proteolysis"/>
    <property type="evidence" value="ECO:0007669"/>
    <property type="project" value="UniProtKB-KW"/>
</dbReference>
<dbReference type="FunFam" id="2.40.128.90:FF:000001">
    <property type="entry name" value="Outer membrane protease"/>
    <property type="match status" value="1"/>
</dbReference>
<dbReference type="Gene3D" id="2.40.128.90">
    <property type="entry name" value="OMPT-like"/>
    <property type="match status" value="1"/>
</dbReference>
<dbReference type="InterPro" id="IPR020080">
    <property type="entry name" value="OM_adhesin/peptidase_omptin"/>
</dbReference>
<dbReference type="InterPro" id="IPR053724">
    <property type="entry name" value="OMP_A26_sf"/>
</dbReference>
<dbReference type="InterPro" id="IPR020079">
    <property type="entry name" value="Peptidase_A26_CS"/>
</dbReference>
<dbReference type="InterPro" id="IPR000036">
    <property type="entry name" value="Peptidase_A26_omptin"/>
</dbReference>
<dbReference type="NCBIfam" id="NF008222">
    <property type="entry name" value="PRK10993.1-1"/>
    <property type="match status" value="1"/>
</dbReference>
<dbReference type="NCBIfam" id="NF008224">
    <property type="entry name" value="PRK10993.1-4"/>
    <property type="match status" value="1"/>
</dbReference>
<dbReference type="Pfam" id="PF01278">
    <property type="entry name" value="Omptin"/>
    <property type="match status" value="1"/>
</dbReference>
<dbReference type="PIRSF" id="PIRSF001522">
    <property type="entry name" value="Peptidase_A26"/>
    <property type="match status" value="1"/>
</dbReference>
<dbReference type="PRINTS" id="PR00482">
    <property type="entry name" value="OMPTIN"/>
</dbReference>
<dbReference type="SUPFAM" id="SSF69917">
    <property type="entry name" value="OMPT-like"/>
    <property type="match status" value="1"/>
</dbReference>
<dbReference type="PROSITE" id="PS00834">
    <property type="entry name" value="OMPTIN_1"/>
    <property type="match status" value="1"/>
</dbReference>
<dbReference type="PROSITE" id="PS00835">
    <property type="entry name" value="OMPTIN_2"/>
    <property type="match status" value="1"/>
</dbReference>
<organism>
    <name type="scientific">Escherichia coli O157:H7</name>
    <dbReference type="NCBI Taxonomy" id="83334"/>
    <lineage>
        <taxon>Bacteria</taxon>
        <taxon>Pseudomonadati</taxon>
        <taxon>Pseudomonadota</taxon>
        <taxon>Gammaproteobacteria</taxon>
        <taxon>Enterobacterales</taxon>
        <taxon>Enterobacteriaceae</taxon>
        <taxon>Escherichia</taxon>
    </lineage>
</organism>
<evidence type="ECO:0000250" key="1"/>
<evidence type="ECO:0000255" key="2"/>
<evidence type="ECO:0000305" key="3"/>
<proteinExistence type="inferred from homology"/>
<name>OMPT_ECO57</name>
<reference key="1">
    <citation type="journal article" date="2001" name="Nature">
        <title>Genome sequence of enterohaemorrhagic Escherichia coli O157:H7.</title>
        <authorList>
            <person name="Perna N.T."/>
            <person name="Plunkett G. III"/>
            <person name="Burland V."/>
            <person name="Mau B."/>
            <person name="Glasner J.D."/>
            <person name="Rose D.J."/>
            <person name="Mayhew G.F."/>
            <person name="Evans P.S."/>
            <person name="Gregor J."/>
            <person name="Kirkpatrick H.A."/>
            <person name="Posfai G."/>
            <person name="Hackett J."/>
            <person name="Klink S."/>
            <person name="Boutin A."/>
            <person name="Shao Y."/>
            <person name="Miller L."/>
            <person name="Grotbeck E.J."/>
            <person name="Davis N.W."/>
            <person name="Lim A."/>
            <person name="Dimalanta E.T."/>
            <person name="Potamousis K."/>
            <person name="Apodaca J."/>
            <person name="Anantharaman T.S."/>
            <person name="Lin J."/>
            <person name="Yen G."/>
            <person name="Schwartz D.C."/>
            <person name="Welch R.A."/>
            <person name="Blattner F.R."/>
        </authorList>
    </citation>
    <scope>NUCLEOTIDE SEQUENCE [LARGE SCALE GENOMIC DNA]</scope>
    <source>
        <strain>O157:H7 / EDL933 / ATCC 700927 / EHEC</strain>
    </source>
</reference>
<reference key="2">
    <citation type="journal article" date="2001" name="DNA Res.">
        <title>Complete genome sequence of enterohemorrhagic Escherichia coli O157:H7 and genomic comparison with a laboratory strain K-12.</title>
        <authorList>
            <person name="Hayashi T."/>
            <person name="Makino K."/>
            <person name="Ohnishi M."/>
            <person name="Kurokawa K."/>
            <person name="Ishii K."/>
            <person name="Yokoyama K."/>
            <person name="Han C.-G."/>
            <person name="Ohtsubo E."/>
            <person name="Nakayama K."/>
            <person name="Murata T."/>
            <person name="Tanaka M."/>
            <person name="Tobe T."/>
            <person name="Iida T."/>
            <person name="Takami H."/>
            <person name="Honda T."/>
            <person name="Sasakawa C."/>
            <person name="Ogasawara N."/>
            <person name="Yasunaga T."/>
            <person name="Kuhara S."/>
            <person name="Shiba T."/>
            <person name="Hattori M."/>
            <person name="Shinagawa H."/>
        </authorList>
    </citation>
    <scope>NUCLEOTIDE SEQUENCE [LARGE SCALE GENOMIC DNA]</scope>
    <source>
        <strain>O157:H7 / Sakai / RIMD 0509952 / EHEC</strain>
    </source>
</reference>
<sequence>MRAKLLGIVLTTPIAISSFASTETLSFTPDNINADISLGTLSGKTKERVYLAEEGGRKVSQLDWKFNNAAIIKGAINWDLMPQISIGAAGWTTLGSRGGNMVDQDWMDSSNPGTWTDESRHPDTQLNYANEFDLNIKGWLLNEPNYRLGLMAGYQESRYSFTARGGSYIYSSEEGFRDDIGSFPNGERAIGYKQRFKMPYIGLTGSYRYEDFELGGTFKYSGWVEASDNDEHYDPGKRITYRSKVKDQNYYSVSVNAGYYVTPNAKVYVEGTWNRVTNKKGNTSLYDHNDNTSDYSKNGAGIENYNFITTAGLKYTF</sequence>
<comment type="function">
    <text evidence="1">Protease that can cleave T7 RNA polymerase, ferric enterobactin receptor protein (FEP), antimicrobial peptide protamine and other proteins. This protease has a specificity for paired basic residues (By similarity).</text>
</comment>
<comment type="catalytic activity">
    <reaction>
        <text>Has a virtual requirement for Arg in the P1 position and a slightly less stringent preference for this residue in the P1' position, which can also contain Lys, Gly or Val.</text>
        <dbReference type="EC" id="3.4.23.49"/>
    </reaction>
</comment>
<comment type="activity regulation">
    <text evidence="1">Inhibited by zinc.</text>
</comment>
<comment type="subunit">
    <text evidence="3">Homopentamer.</text>
</comment>
<comment type="subcellular location">
    <subcellularLocation>
        <location evidence="1">Cell outer membrane</location>
        <topology evidence="1">Multi-pass membrane protein</topology>
    </subcellularLocation>
</comment>
<comment type="similarity">
    <text evidence="3">Belongs to the peptidase A26 family.</text>
</comment>
<protein>
    <recommendedName>
        <fullName>Protease 7</fullName>
        <ecNumber>3.4.23.49</ecNumber>
    </recommendedName>
    <alternativeName>
        <fullName>Omptin</fullName>
    </alternativeName>
    <alternativeName>
        <fullName>Outer membrane protein 3B</fullName>
    </alternativeName>
    <alternativeName>
        <fullName>Protease A</fullName>
    </alternativeName>
    <alternativeName>
        <fullName>Protease VII</fullName>
    </alternativeName>
</protein>
<feature type="signal peptide" evidence="1">
    <location>
        <begin position="1"/>
        <end position="20"/>
    </location>
</feature>
<feature type="chain" id="PRO_0000025816" description="Protease 7">
    <location>
        <begin position="21"/>
        <end position="317"/>
    </location>
</feature>
<feature type="topological domain" description="Periplasmic" evidence="2">
    <location>
        <begin position="21"/>
        <end position="31"/>
    </location>
</feature>
<feature type="transmembrane region" description="Beta stranded" evidence="2">
    <location>
        <begin position="32"/>
        <end position="41"/>
    </location>
</feature>
<feature type="topological domain" description="Extracellular" evidence="2">
    <location>
        <begin position="42"/>
        <end position="69"/>
    </location>
</feature>
<feature type="transmembrane region" description="Beta stranded" evidence="2">
    <location>
        <begin position="70"/>
        <end position="78"/>
    </location>
</feature>
<feature type="topological domain" description="Periplasmic" evidence="2">
    <location>
        <begin position="79"/>
        <end position="83"/>
    </location>
</feature>
<feature type="transmembrane region" description="Beta stranded" evidence="2">
    <location>
        <begin position="84"/>
        <end position="92"/>
    </location>
</feature>
<feature type="topological domain" description="Extracellular" evidence="2">
    <location>
        <begin position="93"/>
        <end position="130"/>
    </location>
</feature>
<feature type="transmembrane region" description="Beta stranded" evidence="2">
    <location>
        <begin position="131"/>
        <end position="140"/>
    </location>
</feature>
<feature type="topological domain" description="Periplasmic" evidence="2">
    <location>
        <begin position="141"/>
        <end position="145"/>
    </location>
</feature>
<feature type="transmembrane region" description="Beta stranded" evidence="2">
    <location>
        <begin position="146"/>
        <end position="156"/>
    </location>
</feature>
<feature type="topological domain" description="Extracellular" evidence="2">
    <location>
        <begin position="157"/>
        <end position="197"/>
    </location>
</feature>
<feature type="transmembrane region" description="Beta stranded" evidence="2">
    <location>
        <begin position="198"/>
        <end position="209"/>
    </location>
</feature>
<feature type="topological domain" description="Periplasmic" evidence="2">
    <location>
        <begin position="210"/>
        <end position="211"/>
    </location>
</feature>
<feature type="transmembrane region" description="Beta stranded" evidence="2">
    <location>
        <begin position="212"/>
        <end position="221"/>
    </location>
</feature>
<feature type="topological domain" description="Extracellular" evidence="2">
    <location>
        <begin position="222"/>
        <end position="250"/>
    </location>
</feature>
<feature type="transmembrane region" description="Beta stranded" evidence="2">
    <location>
        <begin position="251"/>
        <end position="261"/>
    </location>
</feature>
<feature type="topological domain" description="Periplasmic" evidence="2">
    <location>
        <begin position="262"/>
        <end position="264"/>
    </location>
</feature>
<feature type="transmembrane region" description="Beta stranded" evidence="2">
    <location>
        <begin position="265"/>
        <end position="274"/>
    </location>
</feature>
<feature type="topological domain" description="Extracellular" evidence="2">
    <location>
        <begin position="275"/>
        <end position="306"/>
    </location>
</feature>
<feature type="transmembrane region" description="Beta stranded" evidence="2">
    <location>
        <begin position="307"/>
        <end position="316"/>
    </location>
</feature>
<feature type="topological domain" description="Periplasmic" evidence="2">
    <location>
        <position position="317"/>
    </location>
</feature>
<feature type="active site" evidence="3">
    <location>
        <position position="103"/>
    </location>
</feature>
<feature type="active site" evidence="3">
    <location>
        <position position="105"/>
    </location>
</feature>
<feature type="active site" evidence="3">
    <location>
        <position position="230"/>
    </location>
</feature>
<feature type="active site" evidence="3">
    <location>
        <position position="232"/>
    </location>
</feature>
<keyword id="KW-0064">Aspartyl protease</keyword>
<keyword id="KW-0998">Cell outer membrane</keyword>
<keyword id="KW-0378">Hydrolase</keyword>
<keyword id="KW-0472">Membrane</keyword>
<keyword id="KW-0645">Protease</keyword>
<keyword id="KW-1185">Reference proteome</keyword>
<keyword id="KW-0732">Signal</keyword>
<keyword id="KW-0812">Transmembrane</keyword>
<keyword id="KW-1134">Transmembrane beta strand</keyword>
<gene>
    <name type="primary">ompT</name>
    <name type="ordered locus">Z1931</name>
    <name type="ordered locus">ECs1663</name>
</gene>
<accession>P58603</accession>